<protein>
    <recommendedName>
        <fullName evidence="3">Periviscerokinin-2</fullName>
        <shortName evidence="3">SupLo-PVK-2</shortName>
    </recommendedName>
</protein>
<feature type="peptide" id="PRO_0000378813" description="Periviscerokinin-2" evidence="2">
    <location>
        <begin position="1"/>
        <end position="11"/>
    </location>
</feature>
<feature type="modified residue" description="Valine amide" evidence="2">
    <location>
        <position position="11"/>
    </location>
</feature>
<proteinExistence type="evidence at protein level"/>
<name>PVK2_SUPLO</name>
<sequence length="11" mass="1103">GSSGLISMPRV</sequence>
<reference evidence="4" key="1">
    <citation type="journal article" date="2009" name="BMC Evol. Biol.">
        <title>A proteomic approach for studying insect phylogeny: CAPA peptides of ancient insect taxa (Dictyoptera, Blattoptera) as a test case.</title>
        <authorList>
            <person name="Roth S."/>
            <person name="Fromm B."/>
            <person name="Gaede G."/>
            <person name="Predel R."/>
        </authorList>
    </citation>
    <scope>PROTEIN SEQUENCE</scope>
    <scope>AMIDATION AT VAL-11</scope>
    <source>
        <tissue evidence="2">Abdominal perisympathetic organs</tissue>
    </source>
</reference>
<accession>P85779</accession>
<organism>
    <name type="scientific">Supella longipalpa</name>
    <name type="common">Brown-banded cockroach</name>
    <dbReference type="NCBI Taxonomy" id="83902"/>
    <lineage>
        <taxon>Eukaryota</taxon>
        <taxon>Metazoa</taxon>
        <taxon>Ecdysozoa</taxon>
        <taxon>Arthropoda</taxon>
        <taxon>Hexapoda</taxon>
        <taxon>Insecta</taxon>
        <taxon>Pterygota</taxon>
        <taxon>Neoptera</taxon>
        <taxon>Polyneoptera</taxon>
        <taxon>Dictyoptera</taxon>
        <taxon>Blattodea</taxon>
        <taxon>Blaberoidea</taxon>
        <taxon>Ectobiidae</taxon>
        <taxon>Plectopterinae</taxon>
        <taxon>Supella</taxon>
    </lineage>
</organism>
<comment type="function">
    <text evidence="4">Mediates visceral muscle contractile activity (myotropic activity).</text>
</comment>
<comment type="subcellular location">
    <subcellularLocation>
        <location evidence="4">Secreted</location>
    </subcellularLocation>
</comment>
<comment type="similarity">
    <text evidence="1">Belongs to the periviscerokinin family.</text>
</comment>
<keyword id="KW-0027">Amidation</keyword>
<keyword id="KW-0903">Direct protein sequencing</keyword>
<keyword id="KW-0527">Neuropeptide</keyword>
<keyword id="KW-0964">Secreted</keyword>
<dbReference type="GO" id="GO:0005576">
    <property type="term" value="C:extracellular region"/>
    <property type="evidence" value="ECO:0007669"/>
    <property type="project" value="UniProtKB-SubCell"/>
</dbReference>
<dbReference type="GO" id="GO:0007218">
    <property type="term" value="P:neuropeptide signaling pathway"/>
    <property type="evidence" value="ECO:0007669"/>
    <property type="project" value="UniProtKB-KW"/>
</dbReference>
<dbReference type="InterPro" id="IPR013231">
    <property type="entry name" value="Periviscerokinin"/>
</dbReference>
<dbReference type="Pfam" id="PF08259">
    <property type="entry name" value="Periviscerokin"/>
    <property type="match status" value="1"/>
</dbReference>
<evidence type="ECO:0000255" key="1"/>
<evidence type="ECO:0000269" key="2">
    <source>
    </source>
</evidence>
<evidence type="ECO:0000303" key="3">
    <source>
    </source>
</evidence>
<evidence type="ECO:0000305" key="4"/>